<keyword id="KW-0010">Activator</keyword>
<keyword id="KW-0175">Coiled coil</keyword>
<keyword id="KW-0539">Nucleus</keyword>
<keyword id="KW-1185">Reference proteome</keyword>
<keyword id="KW-0804">Transcription</keyword>
<keyword id="KW-0805">Transcription regulation</keyword>
<dbReference type="EMBL" id="FO081669">
    <property type="protein sequence ID" value="CCD73223.1"/>
    <property type="molecule type" value="Genomic_DNA"/>
</dbReference>
<dbReference type="PIR" id="T27901">
    <property type="entry name" value="T27901"/>
</dbReference>
<dbReference type="RefSeq" id="NP_494905.2">
    <property type="nucleotide sequence ID" value="NM_062504.5"/>
</dbReference>
<dbReference type="SMR" id="Q23523"/>
<dbReference type="BioGRID" id="39206">
    <property type="interactions" value="2"/>
</dbReference>
<dbReference type="FunCoup" id="Q23523">
    <property type="interactions" value="1301"/>
</dbReference>
<dbReference type="IntAct" id="Q23523">
    <property type="interactions" value="1"/>
</dbReference>
<dbReference type="STRING" id="6239.ZK546.13.1"/>
<dbReference type="iPTMnet" id="Q23523"/>
<dbReference type="PaxDb" id="6239-ZK546.13"/>
<dbReference type="PeptideAtlas" id="Q23523"/>
<dbReference type="EnsemblMetazoa" id="ZK546.13.1">
    <property type="protein sequence ID" value="ZK546.13.1"/>
    <property type="gene ID" value="WBGene00007012"/>
</dbReference>
<dbReference type="GeneID" id="173852"/>
<dbReference type="KEGG" id="cel:CELE_ZK546.13"/>
<dbReference type="UCSC" id="ZK546.13">
    <property type="organism name" value="c. elegans"/>
</dbReference>
<dbReference type="AGR" id="WB:WBGene00007012"/>
<dbReference type="CTD" id="173852"/>
<dbReference type="WormBase" id="ZK546.13">
    <property type="protein sequence ID" value="CE34460"/>
    <property type="gene ID" value="WBGene00007012"/>
    <property type="gene designation" value="mdt-4"/>
</dbReference>
<dbReference type="eggNOG" id="KOG4552">
    <property type="taxonomic scope" value="Eukaryota"/>
</dbReference>
<dbReference type="GeneTree" id="ENSGT00390000012063"/>
<dbReference type="HOGENOM" id="CLU_832182_0_0_1"/>
<dbReference type="InParanoid" id="Q23523"/>
<dbReference type="OMA" id="HQISKHN"/>
<dbReference type="OrthoDB" id="1929813at2759"/>
<dbReference type="PhylomeDB" id="Q23523"/>
<dbReference type="PRO" id="PR:Q23523"/>
<dbReference type="Proteomes" id="UP000001940">
    <property type="component" value="Chromosome II"/>
</dbReference>
<dbReference type="Bgee" id="WBGene00007012">
    <property type="expression patterns" value="Expressed in embryo and 3 other cell types or tissues"/>
</dbReference>
<dbReference type="GO" id="GO:0070847">
    <property type="term" value="C:core mediator complex"/>
    <property type="evidence" value="ECO:0000318"/>
    <property type="project" value="GO_Central"/>
</dbReference>
<dbReference type="GO" id="GO:0016592">
    <property type="term" value="C:mediator complex"/>
    <property type="evidence" value="ECO:0007669"/>
    <property type="project" value="InterPro"/>
</dbReference>
<dbReference type="GO" id="GO:0003712">
    <property type="term" value="F:transcription coregulator activity"/>
    <property type="evidence" value="ECO:0000318"/>
    <property type="project" value="GO_Central"/>
</dbReference>
<dbReference type="GO" id="GO:0006357">
    <property type="term" value="P:regulation of transcription by RNA polymerase II"/>
    <property type="evidence" value="ECO:0000318"/>
    <property type="project" value="GO_Central"/>
</dbReference>
<dbReference type="InterPro" id="IPR019258">
    <property type="entry name" value="Mediator_Med4"/>
</dbReference>
<dbReference type="PANTHER" id="PTHR13208">
    <property type="entry name" value="MEDIATOR OF RNA POLYMERASE II TRANSCRIPTION SUBUNIT 4"/>
    <property type="match status" value="1"/>
</dbReference>
<dbReference type="PANTHER" id="PTHR13208:SF2">
    <property type="entry name" value="MEDIATOR OF RNA POLYMERASE II TRANSCRIPTION SUBUNIT 4"/>
    <property type="match status" value="1"/>
</dbReference>
<dbReference type="Pfam" id="PF10018">
    <property type="entry name" value="Med4"/>
    <property type="match status" value="1"/>
</dbReference>
<proteinExistence type="inferred from homology"/>
<feature type="chain" id="PRO_0000302071" description="Mediator of RNA polymerase II transcription subunit 4">
    <location>
        <begin position="1"/>
        <end position="334"/>
    </location>
</feature>
<feature type="region of interest" description="Disordered" evidence="3">
    <location>
        <begin position="193"/>
        <end position="334"/>
    </location>
</feature>
<feature type="coiled-coil region" evidence="2">
    <location>
        <begin position="71"/>
        <end position="100"/>
    </location>
</feature>
<feature type="compositionally biased region" description="Polar residues" evidence="3">
    <location>
        <begin position="194"/>
        <end position="206"/>
    </location>
</feature>
<feature type="compositionally biased region" description="Polar residues" evidence="3">
    <location>
        <begin position="251"/>
        <end position="282"/>
    </location>
</feature>
<evidence type="ECO:0000250" key="1"/>
<evidence type="ECO:0000255" key="2"/>
<evidence type="ECO:0000256" key="3">
    <source>
        <dbReference type="SAM" id="MobiDB-lite"/>
    </source>
</evidence>
<evidence type="ECO:0000305" key="4"/>
<name>MED4_CAEEL</name>
<organism>
    <name type="scientific">Caenorhabditis elegans</name>
    <dbReference type="NCBI Taxonomy" id="6239"/>
    <lineage>
        <taxon>Eukaryota</taxon>
        <taxon>Metazoa</taxon>
        <taxon>Ecdysozoa</taxon>
        <taxon>Nematoda</taxon>
        <taxon>Chromadorea</taxon>
        <taxon>Rhabditida</taxon>
        <taxon>Rhabditina</taxon>
        <taxon>Rhabditomorpha</taxon>
        <taxon>Rhabditoidea</taxon>
        <taxon>Rhabditidae</taxon>
        <taxon>Peloderinae</taxon>
        <taxon>Caenorhabditis</taxon>
    </lineage>
</organism>
<gene>
    <name type="primary">mdt-4</name>
    <name type="ORF">ZK546.13</name>
</gene>
<protein>
    <recommendedName>
        <fullName>Mediator of RNA polymerase II transcription subunit 4</fullName>
    </recommendedName>
    <alternativeName>
        <fullName>Mediator complex subunit 4</fullName>
    </alternativeName>
</protein>
<accession>Q23523</accession>
<reference key="1">
    <citation type="journal article" date="1998" name="Science">
        <title>Genome sequence of the nematode C. elegans: a platform for investigating biology.</title>
        <authorList>
            <consortium name="The C. elegans sequencing consortium"/>
        </authorList>
    </citation>
    <scope>NUCLEOTIDE SEQUENCE [LARGE SCALE GENOMIC DNA]</scope>
    <source>
        <strain>Bristol N2</strain>
    </source>
</reference>
<sequence>MAETDERSLRDLLLESADDLEHIVKMIVDTLINRDKSVMLKNGETVTNIIKLFDSKQDSIKTLLKRVPEFQEREQLIRTLEAHVEKRDEVIQQLETNLKSCEVALTRSCFHANQKLKQMKEAELRPVNSEMLIKLAHQISKHNSVSAPLTWQMGDPSRPFPQEHEFRAGHLLNSKVQSTGPQLLPGKNVAQRPLITSPSASSSNGGTAPIRTVGTPLINSAPTGDFSPRTGFGTDEPPPIQQQVLRGATPNEKQWQNPGVSGATSTQSPYNRVSQSPSSSPNVKLKITGLPNRPGGIDQVQDVRDVEQMSSDSSNSSDSSDDEGASKKTGSSNK</sequence>
<comment type="function">
    <text evidence="1">Component of the Mediator complex, a coactivator involved in the regulated transcription of nearly all RNA polymerase II-dependent genes. Mediator functions as a bridge to convey information from gene-specific regulatory proteins to the basal RNA polymerase II transcription machinery. Mediator is recruited to promoters by direct interactions with regulatory proteins and serves as a scaffold for the assembly of a functional preinitiation complex with RNA polymerase II and the general transcription factors (By similarity).</text>
</comment>
<comment type="subunit">
    <text evidence="1">Component of the Mediator complex.</text>
</comment>
<comment type="subcellular location">
    <subcellularLocation>
        <location evidence="1">Nucleus</location>
    </subcellularLocation>
</comment>
<comment type="similarity">
    <text evidence="4">Belongs to the Mediator complex subunit 4 family.</text>
</comment>